<gene>
    <name evidence="1" type="primary">purC</name>
    <name type="ordered locus">SFV_2521</name>
</gene>
<feature type="chain" id="PRO_1000018779" description="Phosphoribosylaminoimidazole-succinocarboxamide synthase">
    <location>
        <begin position="1"/>
        <end position="237"/>
    </location>
</feature>
<evidence type="ECO:0000255" key="1">
    <source>
        <dbReference type="HAMAP-Rule" id="MF_00137"/>
    </source>
</evidence>
<comment type="catalytic activity">
    <reaction evidence="1">
        <text>5-amino-1-(5-phospho-D-ribosyl)imidazole-4-carboxylate + L-aspartate + ATP = (2S)-2-[5-amino-1-(5-phospho-beta-D-ribosyl)imidazole-4-carboxamido]succinate + ADP + phosphate + 2 H(+)</text>
        <dbReference type="Rhea" id="RHEA:22628"/>
        <dbReference type="ChEBI" id="CHEBI:15378"/>
        <dbReference type="ChEBI" id="CHEBI:29991"/>
        <dbReference type="ChEBI" id="CHEBI:30616"/>
        <dbReference type="ChEBI" id="CHEBI:43474"/>
        <dbReference type="ChEBI" id="CHEBI:58443"/>
        <dbReference type="ChEBI" id="CHEBI:77657"/>
        <dbReference type="ChEBI" id="CHEBI:456216"/>
        <dbReference type="EC" id="6.3.2.6"/>
    </reaction>
</comment>
<comment type="pathway">
    <text evidence="1">Purine metabolism; IMP biosynthesis via de novo pathway; 5-amino-1-(5-phospho-D-ribosyl)imidazole-4-carboxamide from 5-amino-1-(5-phospho-D-ribosyl)imidazole-4-carboxylate: step 1/2.</text>
</comment>
<comment type="similarity">
    <text evidence="1">Belongs to the SAICAR synthetase family.</text>
</comment>
<sequence length="237" mass="26995">MQKQAELYRGKAKTVYSTENPDLLVLEFRNDTSAGDGARIEQFDRKGMVNNKFNYFIMSKLAEAGIPTQMERLLSDTECLVKKLDMVPVECVVRNRAAGSLVKRLGIEEGIELNPPLFDLFLKNDAMHDPMVNESYCETFGWVSKENLARMKELTYKANDVLKKLFDDAGLILVDFKLEFGLYKGEVVLGDEFSPDGSRLWDKETLEKMDKDRFRQSLGGLIEAYEAVARRLGVQLD</sequence>
<keyword id="KW-0067">ATP-binding</keyword>
<keyword id="KW-0436">Ligase</keyword>
<keyword id="KW-0547">Nucleotide-binding</keyword>
<keyword id="KW-0658">Purine biosynthesis</keyword>
<proteinExistence type="inferred from homology"/>
<accession>Q0T241</accession>
<organism>
    <name type="scientific">Shigella flexneri serotype 5b (strain 8401)</name>
    <dbReference type="NCBI Taxonomy" id="373384"/>
    <lineage>
        <taxon>Bacteria</taxon>
        <taxon>Pseudomonadati</taxon>
        <taxon>Pseudomonadota</taxon>
        <taxon>Gammaproteobacteria</taxon>
        <taxon>Enterobacterales</taxon>
        <taxon>Enterobacteriaceae</taxon>
        <taxon>Shigella</taxon>
    </lineage>
</organism>
<name>PUR7_SHIF8</name>
<dbReference type="EC" id="6.3.2.6" evidence="1"/>
<dbReference type="EMBL" id="CP000266">
    <property type="protein sequence ID" value="ABF04624.1"/>
    <property type="molecule type" value="Genomic_DNA"/>
</dbReference>
<dbReference type="RefSeq" id="WP_001295467.1">
    <property type="nucleotide sequence ID" value="NC_008258.1"/>
</dbReference>
<dbReference type="SMR" id="Q0T241"/>
<dbReference type="GeneID" id="89517285"/>
<dbReference type="KEGG" id="sfv:SFV_2521"/>
<dbReference type="HOGENOM" id="CLU_061495_2_1_6"/>
<dbReference type="UniPathway" id="UPA00074">
    <property type="reaction ID" value="UER00131"/>
</dbReference>
<dbReference type="Proteomes" id="UP000000659">
    <property type="component" value="Chromosome"/>
</dbReference>
<dbReference type="GO" id="GO:0005829">
    <property type="term" value="C:cytosol"/>
    <property type="evidence" value="ECO:0007669"/>
    <property type="project" value="TreeGrafter"/>
</dbReference>
<dbReference type="GO" id="GO:0005524">
    <property type="term" value="F:ATP binding"/>
    <property type="evidence" value="ECO:0007669"/>
    <property type="project" value="UniProtKB-KW"/>
</dbReference>
<dbReference type="GO" id="GO:0004639">
    <property type="term" value="F:phosphoribosylaminoimidazolesuccinocarboxamide synthase activity"/>
    <property type="evidence" value="ECO:0007669"/>
    <property type="project" value="UniProtKB-UniRule"/>
</dbReference>
<dbReference type="GO" id="GO:0006189">
    <property type="term" value="P:'de novo' IMP biosynthetic process"/>
    <property type="evidence" value="ECO:0007669"/>
    <property type="project" value="UniProtKB-UniRule"/>
</dbReference>
<dbReference type="GO" id="GO:0009236">
    <property type="term" value="P:cobalamin biosynthetic process"/>
    <property type="evidence" value="ECO:0007669"/>
    <property type="project" value="InterPro"/>
</dbReference>
<dbReference type="CDD" id="cd01415">
    <property type="entry name" value="SAICAR_synt_PurC"/>
    <property type="match status" value="1"/>
</dbReference>
<dbReference type="FunFam" id="3.30.200.20:FF:000086">
    <property type="entry name" value="Phosphoribosylaminoimidazole-succinocarboxamide synthase"/>
    <property type="match status" value="1"/>
</dbReference>
<dbReference type="FunFam" id="3.30.470.20:FF:000006">
    <property type="entry name" value="Phosphoribosylaminoimidazole-succinocarboxamide synthase"/>
    <property type="match status" value="1"/>
</dbReference>
<dbReference type="Gene3D" id="3.30.470.20">
    <property type="entry name" value="ATP-grasp fold, B domain"/>
    <property type="match status" value="1"/>
</dbReference>
<dbReference type="Gene3D" id="3.30.200.20">
    <property type="entry name" value="Phosphorylase Kinase, domain 1"/>
    <property type="match status" value="1"/>
</dbReference>
<dbReference type="HAMAP" id="MF_00137">
    <property type="entry name" value="SAICAR_synth"/>
    <property type="match status" value="1"/>
</dbReference>
<dbReference type="InterPro" id="IPR028923">
    <property type="entry name" value="SAICAR_synt/ADE2_N"/>
</dbReference>
<dbReference type="InterPro" id="IPR033934">
    <property type="entry name" value="SAICAR_synt_PurC"/>
</dbReference>
<dbReference type="InterPro" id="IPR001636">
    <property type="entry name" value="SAICAR_synth"/>
</dbReference>
<dbReference type="InterPro" id="IPR050089">
    <property type="entry name" value="SAICAR_synthetase"/>
</dbReference>
<dbReference type="InterPro" id="IPR018236">
    <property type="entry name" value="SAICAR_synthetase_CS"/>
</dbReference>
<dbReference type="NCBIfam" id="TIGR00081">
    <property type="entry name" value="purC"/>
    <property type="match status" value="1"/>
</dbReference>
<dbReference type="PANTHER" id="PTHR43599">
    <property type="entry name" value="MULTIFUNCTIONAL PROTEIN ADE2"/>
    <property type="match status" value="1"/>
</dbReference>
<dbReference type="PANTHER" id="PTHR43599:SF3">
    <property type="entry name" value="SI:DKEY-6E2.2"/>
    <property type="match status" value="1"/>
</dbReference>
<dbReference type="Pfam" id="PF01259">
    <property type="entry name" value="SAICAR_synt"/>
    <property type="match status" value="1"/>
</dbReference>
<dbReference type="SUPFAM" id="SSF56104">
    <property type="entry name" value="SAICAR synthase-like"/>
    <property type="match status" value="1"/>
</dbReference>
<dbReference type="PROSITE" id="PS01057">
    <property type="entry name" value="SAICAR_SYNTHETASE_1"/>
    <property type="match status" value="1"/>
</dbReference>
<dbReference type="PROSITE" id="PS01058">
    <property type="entry name" value="SAICAR_SYNTHETASE_2"/>
    <property type="match status" value="1"/>
</dbReference>
<protein>
    <recommendedName>
        <fullName evidence="1">Phosphoribosylaminoimidazole-succinocarboxamide synthase</fullName>
        <ecNumber evidence="1">6.3.2.6</ecNumber>
    </recommendedName>
    <alternativeName>
        <fullName evidence="1">SAICAR synthetase</fullName>
    </alternativeName>
</protein>
<reference key="1">
    <citation type="journal article" date="2006" name="BMC Genomics">
        <title>Complete genome sequence of Shigella flexneri 5b and comparison with Shigella flexneri 2a.</title>
        <authorList>
            <person name="Nie H."/>
            <person name="Yang F."/>
            <person name="Zhang X."/>
            <person name="Yang J."/>
            <person name="Chen L."/>
            <person name="Wang J."/>
            <person name="Xiong Z."/>
            <person name="Peng J."/>
            <person name="Sun L."/>
            <person name="Dong J."/>
            <person name="Xue Y."/>
            <person name="Xu X."/>
            <person name="Chen S."/>
            <person name="Yao Z."/>
            <person name="Shen Y."/>
            <person name="Jin Q."/>
        </authorList>
    </citation>
    <scope>NUCLEOTIDE SEQUENCE [LARGE SCALE GENOMIC DNA]</scope>
    <source>
        <strain>8401</strain>
    </source>
</reference>